<sequence length="274" mass="31056">MKNTDKKIAVFSNYKPQSKEVCQLLIKKLRQNRFILTDKNPDIVISVGGDGMLLSVFHKYEKQLDKVRFVGVHTGHLGFYTDYRDFEIDKLIDNLKLDTGAQVSYPILNVRIFLEDGSVKTKLALNEATIKRSDRTMVADVMINHVAFERFRGDGISVSTPTGSTAYNKSLGGAVLHPTIEALQIAEVASLNNRVYRTLGSSIIVPKKDKIEIFPTRNDQHTISVDNRTYTFKHIAKVEFQIDNHKIHFVASPSHTSFWNRVKDAFIGEVDDEI</sequence>
<protein>
    <recommendedName>
        <fullName evidence="1">NAD kinase</fullName>
        <ecNumber evidence="1">2.7.1.23</ecNumber>
    </recommendedName>
    <alternativeName>
        <fullName evidence="1">ATP-dependent NAD kinase</fullName>
    </alternativeName>
</protein>
<evidence type="ECO:0000255" key="1">
    <source>
        <dbReference type="HAMAP-Rule" id="MF_00361"/>
    </source>
</evidence>
<keyword id="KW-0067">ATP-binding</keyword>
<keyword id="KW-0963">Cytoplasm</keyword>
<keyword id="KW-0418">Kinase</keyword>
<keyword id="KW-0520">NAD</keyword>
<keyword id="KW-0521">NADP</keyword>
<keyword id="KW-0547">Nucleotide-binding</keyword>
<keyword id="KW-1185">Reference proteome</keyword>
<keyword id="KW-0808">Transferase</keyword>
<accession>A8AXJ8</accession>
<name>NADK_STRGC</name>
<dbReference type="EC" id="2.7.1.23" evidence="1"/>
<dbReference type="EMBL" id="CP000725">
    <property type="protein sequence ID" value="ABV09301.1"/>
    <property type="molecule type" value="Genomic_DNA"/>
</dbReference>
<dbReference type="RefSeq" id="WP_012000622.1">
    <property type="nucleotide sequence ID" value="NC_009785.1"/>
</dbReference>
<dbReference type="SMR" id="A8AXJ8"/>
<dbReference type="STRING" id="467705.SGO_1221"/>
<dbReference type="KEGG" id="sgo:SGO_1221"/>
<dbReference type="eggNOG" id="COG0061">
    <property type="taxonomic scope" value="Bacteria"/>
</dbReference>
<dbReference type="HOGENOM" id="CLU_008831_0_3_9"/>
<dbReference type="Proteomes" id="UP000001131">
    <property type="component" value="Chromosome"/>
</dbReference>
<dbReference type="GO" id="GO:0005737">
    <property type="term" value="C:cytoplasm"/>
    <property type="evidence" value="ECO:0007669"/>
    <property type="project" value="UniProtKB-SubCell"/>
</dbReference>
<dbReference type="GO" id="GO:0005524">
    <property type="term" value="F:ATP binding"/>
    <property type="evidence" value="ECO:0007669"/>
    <property type="project" value="UniProtKB-KW"/>
</dbReference>
<dbReference type="GO" id="GO:0046872">
    <property type="term" value="F:metal ion binding"/>
    <property type="evidence" value="ECO:0007669"/>
    <property type="project" value="UniProtKB-UniRule"/>
</dbReference>
<dbReference type="GO" id="GO:0051287">
    <property type="term" value="F:NAD binding"/>
    <property type="evidence" value="ECO:0007669"/>
    <property type="project" value="UniProtKB-ARBA"/>
</dbReference>
<dbReference type="GO" id="GO:0003951">
    <property type="term" value="F:NAD+ kinase activity"/>
    <property type="evidence" value="ECO:0007669"/>
    <property type="project" value="UniProtKB-UniRule"/>
</dbReference>
<dbReference type="GO" id="GO:0019674">
    <property type="term" value="P:NAD metabolic process"/>
    <property type="evidence" value="ECO:0007669"/>
    <property type="project" value="InterPro"/>
</dbReference>
<dbReference type="GO" id="GO:0006741">
    <property type="term" value="P:NADP biosynthetic process"/>
    <property type="evidence" value="ECO:0007669"/>
    <property type="project" value="UniProtKB-UniRule"/>
</dbReference>
<dbReference type="FunFam" id="2.60.200.30:FF:000002">
    <property type="entry name" value="NAD kinase"/>
    <property type="match status" value="1"/>
</dbReference>
<dbReference type="Gene3D" id="3.40.50.10330">
    <property type="entry name" value="Probable inorganic polyphosphate/atp-NAD kinase, domain 1"/>
    <property type="match status" value="1"/>
</dbReference>
<dbReference type="Gene3D" id="2.60.200.30">
    <property type="entry name" value="Probable inorganic polyphosphate/atp-NAD kinase, domain 2"/>
    <property type="match status" value="1"/>
</dbReference>
<dbReference type="HAMAP" id="MF_00361">
    <property type="entry name" value="NAD_kinase"/>
    <property type="match status" value="1"/>
</dbReference>
<dbReference type="InterPro" id="IPR017438">
    <property type="entry name" value="ATP-NAD_kinase_N"/>
</dbReference>
<dbReference type="InterPro" id="IPR017437">
    <property type="entry name" value="ATP-NAD_kinase_PpnK-typ_C"/>
</dbReference>
<dbReference type="InterPro" id="IPR016064">
    <property type="entry name" value="NAD/diacylglycerol_kinase_sf"/>
</dbReference>
<dbReference type="InterPro" id="IPR002504">
    <property type="entry name" value="NADK"/>
</dbReference>
<dbReference type="NCBIfam" id="NF003424">
    <property type="entry name" value="PRK04885.1"/>
    <property type="match status" value="1"/>
</dbReference>
<dbReference type="PANTHER" id="PTHR20275">
    <property type="entry name" value="NAD KINASE"/>
    <property type="match status" value="1"/>
</dbReference>
<dbReference type="PANTHER" id="PTHR20275:SF0">
    <property type="entry name" value="NAD KINASE"/>
    <property type="match status" value="1"/>
</dbReference>
<dbReference type="Pfam" id="PF01513">
    <property type="entry name" value="NAD_kinase"/>
    <property type="match status" value="1"/>
</dbReference>
<dbReference type="Pfam" id="PF20143">
    <property type="entry name" value="NAD_kinase_C"/>
    <property type="match status" value="1"/>
</dbReference>
<dbReference type="SUPFAM" id="SSF111331">
    <property type="entry name" value="NAD kinase/diacylglycerol kinase-like"/>
    <property type="match status" value="1"/>
</dbReference>
<gene>
    <name evidence="1" type="primary">nadK</name>
    <name type="ordered locus">SGO_1221</name>
</gene>
<comment type="function">
    <text evidence="1">Involved in the regulation of the intracellular balance of NAD and NADP, and is a key enzyme in the biosynthesis of NADP. Catalyzes specifically the phosphorylation on 2'-hydroxyl of the adenosine moiety of NAD to yield NADP.</text>
</comment>
<comment type="catalytic activity">
    <reaction evidence="1">
        <text>NAD(+) + ATP = ADP + NADP(+) + H(+)</text>
        <dbReference type="Rhea" id="RHEA:18629"/>
        <dbReference type="ChEBI" id="CHEBI:15378"/>
        <dbReference type="ChEBI" id="CHEBI:30616"/>
        <dbReference type="ChEBI" id="CHEBI:57540"/>
        <dbReference type="ChEBI" id="CHEBI:58349"/>
        <dbReference type="ChEBI" id="CHEBI:456216"/>
        <dbReference type="EC" id="2.7.1.23"/>
    </reaction>
</comment>
<comment type="cofactor">
    <cofactor evidence="1">
        <name>a divalent metal cation</name>
        <dbReference type="ChEBI" id="CHEBI:60240"/>
    </cofactor>
</comment>
<comment type="subcellular location">
    <subcellularLocation>
        <location evidence="1">Cytoplasm</location>
    </subcellularLocation>
</comment>
<comment type="similarity">
    <text evidence="1">Belongs to the NAD kinase family.</text>
</comment>
<feature type="chain" id="PRO_1000079525" description="NAD kinase">
    <location>
        <begin position="1"/>
        <end position="274"/>
    </location>
</feature>
<feature type="active site" description="Proton acceptor" evidence="1">
    <location>
        <position position="50"/>
    </location>
</feature>
<feature type="binding site" evidence="1">
    <location>
        <begin position="50"/>
        <end position="51"/>
    </location>
    <ligand>
        <name>NAD(+)</name>
        <dbReference type="ChEBI" id="CHEBI:57540"/>
    </ligand>
</feature>
<feature type="binding site" evidence="1">
    <location>
        <begin position="126"/>
        <end position="127"/>
    </location>
    <ligand>
        <name>NAD(+)</name>
        <dbReference type="ChEBI" id="CHEBI:57540"/>
    </ligand>
</feature>
<feature type="binding site" evidence="1">
    <location>
        <position position="152"/>
    </location>
    <ligand>
        <name>NAD(+)</name>
        <dbReference type="ChEBI" id="CHEBI:57540"/>
    </ligand>
</feature>
<feature type="binding site" evidence="1">
    <location>
        <position position="154"/>
    </location>
    <ligand>
        <name>NAD(+)</name>
        <dbReference type="ChEBI" id="CHEBI:57540"/>
    </ligand>
</feature>
<feature type="binding site" evidence="1">
    <location>
        <begin position="165"/>
        <end position="170"/>
    </location>
    <ligand>
        <name>NAD(+)</name>
        <dbReference type="ChEBI" id="CHEBI:57540"/>
    </ligand>
</feature>
<feature type="binding site" evidence="1">
    <location>
        <position position="189"/>
    </location>
    <ligand>
        <name>NAD(+)</name>
        <dbReference type="ChEBI" id="CHEBI:57540"/>
    </ligand>
</feature>
<proteinExistence type="inferred from homology"/>
<organism>
    <name type="scientific">Streptococcus gordonii (strain Challis / ATCC 35105 / BCRC 15272 / CH1 / DL1 / V288)</name>
    <dbReference type="NCBI Taxonomy" id="467705"/>
    <lineage>
        <taxon>Bacteria</taxon>
        <taxon>Bacillati</taxon>
        <taxon>Bacillota</taxon>
        <taxon>Bacilli</taxon>
        <taxon>Lactobacillales</taxon>
        <taxon>Streptococcaceae</taxon>
        <taxon>Streptococcus</taxon>
    </lineage>
</organism>
<reference key="1">
    <citation type="journal article" date="2007" name="J. Bacteriol.">
        <title>Genome-wide transcriptional changes in Streptococcus gordonii in response to competence signaling peptide.</title>
        <authorList>
            <person name="Vickerman M.M."/>
            <person name="Iobst S."/>
            <person name="Jesionowski A.M."/>
            <person name="Gill S.R."/>
        </authorList>
    </citation>
    <scope>NUCLEOTIDE SEQUENCE [LARGE SCALE GENOMIC DNA]</scope>
    <source>
        <strain>Challis / ATCC 35105 / BCRC 15272 / CH1 / DL1 / V288</strain>
    </source>
</reference>